<evidence type="ECO:0000250" key="1">
    <source>
        <dbReference type="UniProtKB" id="Q17339"/>
    </source>
</evidence>
<evidence type="ECO:0000250" key="2">
    <source>
        <dbReference type="UniProtKB" id="Q96PU8"/>
    </source>
</evidence>
<evidence type="ECO:0000269" key="3">
    <source>
    </source>
</evidence>
<evidence type="ECO:0000269" key="4">
    <source>
    </source>
</evidence>
<evidence type="ECO:0000269" key="5">
    <source>
    </source>
</evidence>
<evidence type="ECO:0000269" key="6">
    <source>
    </source>
</evidence>
<evidence type="ECO:0000269" key="7">
    <source>
    </source>
</evidence>
<evidence type="ECO:0000269" key="8">
    <source>
    </source>
</evidence>
<evidence type="ECO:0000269" key="9">
    <source>
    </source>
</evidence>
<evidence type="ECO:0000269" key="10">
    <source>
    </source>
</evidence>
<evidence type="ECO:0000269" key="11">
    <source>
    </source>
</evidence>
<evidence type="ECO:0000269" key="12">
    <source>
    </source>
</evidence>
<evidence type="ECO:0000269" key="13">
    <source>
    </source>
</evidence>
<evidence type="ECO:0000269" key="14">
    <source>
    </source>
</evidence>
<evidence type="ECO:0000269" key="15">
    <source>
    </source>
</evidence>
<evidence type="ECO:0000269" key="16">
    <source>
    </source>
</evidence>
<evidence type="ECO:0000269" key="17">
    <source>
    </source>
</evidence>
<evidence type="ECO:0000269" key="18">
    <source>
    </source>
</evidence>
<evidence type="ECO:0000269" key="19">
    <source>
    </source>
</evidence>
<evidence type="ECO:0000269" key="20">
    <source>
    </source>
</evidence>
<evidence type="ECO:0000269" key="21">
    <source>
    </source>
</evidence>
<evidence type="ECO:0000269" key="22">
    <source>
    </source>
</evidence>
<evidence type="ECO:0000269" key="23">
    <source>
    </source>
</evidence>
<evidence type="ECO:0000269" key="24">
    <source>
    </source>
</evidence>
<evidence type="ECO:0000269" key="25">
    <source>
    </source>
</evidence>
<evidence type="ECO:0000269" key="26">
    <source>
    </source>
</evidence>
<evidence type="ECO:0000269" key="27">
    <source>
    </source>
</evidence>
<evidence type="ECO:0000269" key="28">
    <source>
    </source>
</evidence>
<evidence type="ECO:0000269" key="29">
    <source>
    </source>
</evidence>
<evidence type="ECO:0000269" key="30">
    <source>
    </source>
</evidence>
<evidence type="ECO:0000269" key="31">
    <source>
    </source>
</evidence>
<evidence type="ECO:0000269" key="32">
    <source>
    </source>
</evidence>
<evidence type="ECO:0000269" key="33">
    <source>
    </source>
</evidence>
<evidence type="ECO:0000269" key="34">
    <source>
    </source>
</evidence>
<evidence type="ECO:0000269" key="35">
    <source>
    </source>
</evidence>
<evidence type="ECO:0000269" key="36">
    <source>
    </source>
</evidence>
<evidence type="ECO:0000269" key="37">
    <source>
    </source>
</evidence>
<evidence type="ECO:0000269" key="38">
    <source>
    </source>
</evidence>
<evidence type="ECO:0000269" key="39">
    <source>
    </source>
</evidence>
<evidence type="ECO:0000269" key="40">
    <source>
    </source>
</evidence>
<evidence type="ECO:0000269" key="41">
    <source>
    </source>
</evidence>
<evidence type="ECO:0000303" key="42">
    <source>
    </source>
</evidence>
<evidence type="ECO:0000303" key="43">
    <source>
    </source>
</evidence>
<evidence type="ECO:0000303" key="44">
    <source>
    </source>
</evidence>
<evidence type="ECO:0000303" key="45">
    <source>
    </source>
</evidence>
<evidence type="ECO:0000303" key="46">
    <source>
    </source>
</evidence>
<evidence type="ECO:0000303" key="47">
    <source>
    </source>
</evidence>
<evidence type="ECO:0000305" key="48"/>
<evidence type="ECO:0000312" key="49">
    <source>
        <dbReference type="MGI" id="MGI:97837"/>
    </source>
</evidence>
<evidence type="ECO:0007744" key="50">
    <source>
        <dbReference type="PDB" id="4DNN"/>
    </source>
</evidence>
<evidence type="ECO:0007744" key="51">
    <source>
    </source>
</evidence>
<evidence type="ECO:0007829" key="52">
    <source>
        <dbReference type="PDB" id="4DNN"/>
    </source>
</evidence>
<accession>Q9QYS9</accession>
<accession>O88972</accession>
<accession>Q61110</accession>
<accession>Q78ZE4</accession>
<accession>Q78ZE5</accession>
<accession>Q8K4X9</accession>
<accession>Q8K4Y0</accession>
<accession>Q9CW34</accession>
<accession>Q9QUH4</accession>
<accession>Q9R2A8</accession>
<accession>Q9Z246</accession>
<gene>
    <name evidence="42 49" type="primary">Qki</name>
    <name evidence="45" type="synonym">Qk</name>
    <name evidence="47" type="synonym">Qk1</name>
</gene>
<feature type="chain" id="PRO_0000239374" description="KH domain-containing RNA-binding protein QKI">
    <location>
        <begin position="1"/>
        <end position="341"/>
    </location>
</feature>
<feature type="domain" description="KH">
    <location>
        <begin position="87"/>
        <end position="153"/>
    </location>
</feature>
<feature type="region of interest" description="Qua1 domain; involved in homodimerization" evidence="1">
    <location>
        <begin position="11"/>
        <end position="82"/>
    </location>
</feature>
<feature type="region of interest" description="Qua2 domain; involved in RNA binding" evidence="2">
    <location>
        <begin position="182"/>
        <end position="213"/>
    </location>
</feature>
<feature type="short sequence motif" description="SH3-binding">
    <location>
        <begin position="276"/>
        <end position="279"/>
    </location>
</feature>
<feature type="short sequence motif" description="Nuclear localization signal" evidence="4 25">
    <location>
        <begin position="324"/>
        <end position="330"/>
    </location>
</feature>
<feature type="site" description="Involved in RNA binding" evidence="2">
    <location>
        <position position="97"/>
    </location>
</feature>
<feature type="site" description="Involved in RNA binding" evidence="2">
    <location>
        <position position="120"/>
    </location>
</feature>
<feature type="site" description="Involved in RNA binding" evidence="2">
    <location>
        <position position="124"/>
    </location>
</feature>
<feature type="site" description="Involved in RNA binding" evidence="2">
    <location>
        <position position="130"/>
    </location>
</feature>
<feature type="site" description="Involved in RNA binding" evidence="2">
    <location>
        <position position="190"/>
    </location>
</feature>
<feature type="site" description="Involved in RNA binding" evidence="2">
    <location>
        <position position="193"/>
    </location>
</feature>
<feature type="modified residue" description="Phosphoserine" evidence="2">
    <location>
        <position position="188"/>
    </location>
</feature>
<feature type="modified residue" description="Omega-N-methylarginine" evidence="51">
    <location>
        <position position="227"/>
    </location>
</feature>
<feature type="modified residue" description="Asymmetric dimethylarginine; by CARM1; alternate" evidence="2">
    <location>
        <position position="242"/>
    </location>
</feature>
<feature type="modified residue" description="Omega-N-methylarginine; alternate" evidence="51">
    <location>
        <position position="242"/>
    </location>
</feature>
<feature type="modified residue" description="Omega-N-methylarginine" evidence="51">
    <location>
        <position position="256"/>
    </location>
</feature>
<feature type="splice variant" id="VSP_019192" description="In isoform QKID." evidence="48">
    <original>AEGED</original>
    <variation>VSKFS</variation>
    <location>
        <begin position="183"/>
        <end position="187"/>
    </location>
</feature>
<feature type="splice variant" id="VSP_019193" description="In isoform QKID." evidence="48">
    <location>
        <begin position="188"/>
        <end position="341"/>
    </location>
</feature>
<feature type="splice variant" id="VSP_019194" description="In isoform 6." evidence="48">
    <location>
        <begin position="213"/>
        <end position="220"/>
    </location>
</feature>
<feature type="splice variant" id="VSP_019197" description="In isoform QKI6." evidence="42">
    <original>GAVATKVRRHDMRVHPYQRIVTADRAATGN</original>
    <variation>GMAFPTKG</variation>
    <location>
        <begin position="312"/>
        <end position="341"/>
    </location>
</feature>
<feature type="splice variant" id="VSP_019196" description="In isoform QKI7." evidence="42 46">
    <original>GAVATKVRRHDMRVHPYQRIVTADRAATGN</original>
    <variation>EWIEMPVMPDISAH</variation>
    <location>
        <begin position="312"/>
        <end position="341"/>
    </location>
</feature>
<feature type="splice variant" id="VSP_019195" description="In isoform QKI7B and isoform 6." evidence="42">
    <original>GAVATKVRRHDMRVHPYQRIVTADRAATGN</original>
    <variation>VWLSQRKAKNSRTVLTEPSSDLNLTNA</variation>
    <location>
        <begin position="312"/>
        <end position="341"/>
    </location>
</feature>
<feature type="splice variant" id="VSP_019198" description="In isoform QKIG." evidence="48">
    <original>GAVATKVRRHDMRVHPYQRIVTADRAATGN</original>
    <variation>GKYDSCTM</variation>
    <location>
        <begin position="312"/>
        <end position="341"/>
    </location>
</feature>
<feature type="splice variant" id="VSP_019199" description="In isoform QKI5A." evidence="42">
    <original>N</original>
    <variation>NVNW</variation>
    <location>
        <position position="341"/>
    </location>
</feature>
<feature type="mutagenesis site" description="Impaired homodimerization." evidence="23">
    <original>Y</original>
    <variation>F</variation>
    <location>
        <position position="17"/>
    </location>
</feature>
<feature type="mutagenesis site" description="Impaired homodimerization." evidence="23">
    <original>L</original>
    <variation>A</variation>
    <location>
        <position position="21"/>
    </location>
</feature>
<feature type="mutagenesis site" description="Impaired homodimerization." evidence="23">
    <original>E</original>
    <variation>A</variation>
    <location>
        <position position="48"/>
    </location>
</feature>
<feature type="mutagenesis site" description="In qk-Kt4; induces embryonic lethality possibly due to its inability to homodimerize." evidence="4 23 37 40">
    <original>E</original>
    <variation>G</variation>
    <location>
        <position position="48"/>
    </location>
</feature>
<feature type="mutagenesis site" description="In qk-k24; induces embryonic lethality possibly due to blood vessel defects; prevents RNA-binding but not homodimerization." evidence="3 8 10">
    <original>V</original>
    <variation>E</variation>
    <location>
        <position position="157"/>
    </location>
</feature>
<feature type="mutagenesis site" description="Strongly impairs phosphorylation." evidence="12">
    <original>PPGP</original>
    <variation>AAGA</variation>
    <location>
        <begin position="276"/>
        <end position="279"/>
    </location>
</feature>
<feature type="mutagenesis site" description="Abolishes phosphorylation and RNA-binding; when associated with F-288; F-290; F-292 and F-303." evidence="12">
    <original>Y</original>
    <variation>F</variation>
    <location>
        <position position="285"/>
    </location>
</feature>
<feature type="mutagenesis site" description="Abolishes phosphorylation and RNA-binding; when associated with F-285; F-290; F-292 and F-303." evidence="12">
    <original>Y</original>
    <variation>F</variation>
    <location>
        <position position="288"/>
    </location>
</feature>
<feature type="mutagenesis site" description="Abolishes phosphorylation and RNA-binding; when associated with F-285; F-288; F-292 and F-303." evidence="12">
    <original>Y</original>
    <variation>F</variation>
    <location>
        <position position="290"/>
    </location>
</feature>
<feature type="mutagenesis site" description="Abolishes phosphorylation and RNA-binding; when associated with F-285; F-288; F-290 and F-303." evidence="12">
    <original>Y</original>
    <variation>F</variation>
    <location>
        <position position="292"/>
    </location>
</feature>
<feature type="mutagenesis site" description="Abolishes phosphorylation and RNA-binding; when associated with F-285; F-288; F-290 and F-292." evidence="12">
    <original>Y</original>
    <variation>F</variation>
    <location>
        <position position="303"/>
    </location>
</feature>
<feature type="mutagenesis site" description="Abolishes nuclear localization; when associated with A-330." evidence="4">
    <original>R</original>
    <variation>A</variation>
    <location>
        <position position="324"/>
    </location>
</feature>
<feature type="mutagenesis site" description="Does not affect nuclear localization." evidence="4">
    <original>Y</original>
    <variation>F</variation>
    <location>
        <position position="328"/>
    </location>
</feature>
<feature type="mutagenesis site" description="Abolishes nuclear localization; when associated with A-324." evidence="4">
    <original>R</original>
    <variation>A</variation>
    <location>
        <position position="330"/>
    </location>
</feature>
<feature type="sequence conflict" description="In Ref. 4; BAB23859." evidence="48" ref="4">
    <original>P</original>
    <variation>A</variation>
    <location>
        <position position="276"/>
    </location>
</feature>
<feature type="helix" evidence="52">
    <location>
        <begin position="15"/>
        <end position="30"/>
    </location>
</feature>
<feature type="helix" evidence="52">
    <location>
        <begin position="32"/>
        <end position="35"/>
    </location>
</feature>
<feature type="helix" evidence="52">
    <location>
        <begin position="41"/>
        <end position="58"/>
    </location>
</feature>
<dbReference type="EMBL" id="U44940">
    <property type="protein sequence ID" value="AAC52491.1"/>
    <property type="molecule type" value="mRNA"/>
</dbReference>
<dbReference type="EMBL" id="AF090402">
    <property type="protein sequence ID" value="AAC99452.1"/>
    <property type="molecule type" value="mRNA"/>
</dbReference>
<dbReference type="EMBL" id="AF090403">
    <property type="protein sequence ID" value="AAC99453.1"/>
    <property type="molecule type" value="mRNA"/>
</dbReference>
<dbReference type="EMBL" id="AF090404">
    <property type="protein sequence ID" value="AAC99454.1"/>
    <property type="molecule type" value="mRNA"/>
</dbReference>
<dbReference type="EMBL" id="AF091047">
    <property type="protein sequence ID" value="AAC63042.1"/>
    <property type="molecule type" value="mRNA"/>
</dbReference>
<dbReference type="EMBL" id="AF090401">
    <property type="protein sequence ID" value="AAD53329.1"/>
    <property type="molecule type" value="Genomic_DNA"/>
</dbReference>
<dbReference type="EMBL" id="AF090392">
    <property type="protein sequence ID" value="AAD53329.1"/>
    <property type="status" value="JOINED"/>
    <property type="molecule type" value="Genomic_DNA"/>
</dbReference>
<dbReference type="EMBL" id="AF090393">
    <property type="protein sequence ID" value="AAD53329.1"/>
    <property type="status" value="JOINED"/>
    <property type="molecule type" value="Genomic_DNA"/>
</dbReference>
<dbReference type="EMBL" id="AF090394">
    <property type="protein sequence ID" value="AAD53329.1"/>
    <property type="status" value="JOINED"/>
    <property type="molecule type" value="Genomic_DNA"/>
</dbReference>
<dbReference type="EMBL" id="AF090395">
    <property type="protein sequence ID" value="AAD53329.1"/>
    <property type="status" value="JOINED"/>
    <property type="molecule type" value="Genomic_DNA"/>
</dbReference>
<dbReference type="EMBL" id="AF090396">
    <property type="protein sequence ID" value="AAD53329.1"/>
    <property type="status" value="JOINED"/>
    <property type="molecule type" value="Genomic_DNA"/>
</dbReference>
<dbReference type="EMBL" id="AF090397">
    <property type="protein sequence ID" value="AAD53329.1"/>
    <property type="status" value="JOINED"/>
    <property type="molecule type" value="Genomic_DNA"/>
</dbReference>
<dbReference type="EMBL" id="AF090400">
    <property type="protein sequence ID" value="AAD53329.1"/>
    <property type="status" value="JOINED"/>
    <property type="molecule type" value="Genomic_DNA"/>
</dbReference>
<dbReference type="EMBL" id="AF090397">
    <property type="protein sequence ID" value="AAD53330.1"/>
    <property type="molecule type" value="Genomic_DNA"/>
</dbReference>
<dbReference type="EMBL" id="AF090392">
    <property type="protein sequence ID" value="AAD53330.1"/>
    <property type="status" value="JOINED"/>
    <property type="molecule type" value="Genomic_DNA"/>
</dbReference>
<dbReference type="EMBL" id="AF090393">
    <property type="protein sequence ID" value="AAD53330.1"/>
    <property type="status" value="JOINED"/>
    <property type="molecule type" value="Genomic_DNA"/>
</dbReference>
<dbReference type="EMBL" id="AF090394">
    <property type="protein sequence ID" value="AAD53330.1"/>
    <property type="status" value="JOINED"/>
    <property type="molecule type" value="Genomic_DNA"/>
</dbReference>
<dbReference type="EMBL" id="AF090395">
    <property type="protein sequence ID" value="AAD53330.1"/>
    <property type="status" value="JOINED"/>
    <property type="molecule type" value="Genomic_DNA"/>
</dbReference>
<dbReference type="EMBL" id="AF090396">
    <property type="protein sequence ID" value="AAD53330.1"/>
    <property type="status" value="JOINED"/>
    <property type="molecule type" value="Genomic_DNA"/>
</dbReference>
<dbReference type="EMBL" id="AF090397">
    <property type="protein sequence ID" value="AAD53331.1"/>
    <property type="molecule type" value="Genomic_DNA"/>
</dbReference>
<dbReference type="EMBL" id="AF090392">
    <property type="protein sequence ID" value="AAD53331.1"/>
    <property type="status" value="JOINED"/>
    <property type="molecule type" value="Genomic_DNA"/>
</dbReference>
<dbReference type="EMBL" id="AF090393">
    <property type="protein sequence ID" value="AAD53331.1"/>
    <property type="status" value="JOINED"/>
    <property type="molecule type" value="Genomic_DNA"/>
</dbReference>
<dbReference type="EMBL" id="AF090395">
    <property type="protein sequence ID" value="AAD53331.1"/>
    <property type="status" value="JOINED"/>
    <property type="molecule type" value="Genomic_DNA"/>
</dbReference>
<dbReference type="EMBL" id="AF090396">
    <property type="protein sequence ID" value="AAD53331.1"/>
    <property type="status" value="JOINED"/>
    <property type="molecule type" value="Genomic_DNA"/>
</dbReference>
<dbReference type="EMBL" id="AF090394">
    <property type="protein sequence ID" value="AAD53331.1"/>
    <property type="status" value="JOINED"/>
    <property type="molecule type" value="Genomic_DNA"/>
</dbReference>
<dbReference type="EMBL" id="AF090396">
    <property type="protein sequence ID" value="AAD53332.1"/>
    <property type="molecule type" value="Genomic_DNA"/>
</dbReference>
<dbReference type="EMBL" id="AF090392">
    <property type="protein sequence ID" value="AAD53332.1"/>
    <property type="status" value="JOINED"/>
    <property type="molecule type" value="Genomic_DNA"/>
</dbReference>
<dbReference type="EMBL" id="AF090393">
    <property type="protein sequence ID" value="AAD53332.1"/>
    <property type="status" value="JOINED"/>
    <property type="molecule type" value="Genomic_DNA"/>
</dbReference>
<dbReference type="EMBL" id="AF090394">
    <property type="protein sequence ID" value="AAD53332.1"/>
    <property type="status" value="JOINED"/>
    <property type="molecule type" value="Genomic_DNA"/>
</dbReference>
<dbReference type="EMBL" id="AF090395">
    <property type="protein sequence ID" value="AAD53332.1"/>
    <property type="status" value="JOINED"/>
    <property type="molecule type" value="Genomic_DNA"/>
</dbReference>
<dbReference type="EMBL" id="AF467890">
    <property type="protein sequence ID" value="AAM21006.1"/>
    <property type="molecule type" value="Genomic_DNA"/>
</dbReference>
<dbReference type="EMBL" id="AF467890">
    <property type="protein sequence ID" value="AAM21007.1"/>
    <property type="molecule type" value="Genomic_DNA"/>
</dbReference>
<dbReference type="EMBL" id="AF467890">
    <property type="protein sequence ID" value="AAM21008.1"/>
    <property type="molecule type" value="Genomic_DNA"/>
</dbReference>
<dbReference type="EMBL" id="AF467890">
    <property type="protein sequence ID" value="AAM21009.1"/>
    <property type="molecule type" value="Genomic_DNA"/>
</dbReference>
<dbReference type="EMBL" id="AF467890">
    <property type="protein sequence ID" value="AAM21010.1"/>
    <property type="molecule type" value="Genomic_DNA"/>
</dbReference>
<dbReference type="EMBL" id="AK005169">
    <property type="protein sequence ID" value="BAB23859.1"/>
    <property type="molecule type" value="mRNA"/>
</dbReference>
<dbReference type="EMBL" id="AK132303">
    <property type="protein sequence ID" value="BAE21091.1"/>
    <property type="molecule type" value="mRNA"/>
</dbReference>
<dbReference type="EMBL" id="BC053426">
    <property type="protein sequence ID" value="AAH53426.1"/>
    <property type="molecule type" value="mRNA"/>
</dbReference>
<dbReference type="EMBL" id="BC056346">
    <property type="protein sequence ID" value="AAH56346.1"/>
    <property type="molecule type" value="mRNA"/>
</dbReference>
<dbReference type="EMBL" id="AJ012812">
    <property type="protein sequence ID" value="CAB37614.1"/>
    <property type="molecule type" value="Genomic_DNA"/>
</dbReference>
<dbReference type="EMBL" id="AJ012813">
    <property type="protein sequence ID" value="CAB37614.1"/>
    <property type="status" value="JOINED"/>
    <property type="molecule type" value="Genomic_DNA"/>
</dbReference>
<dbReference type="EMBL" id="AJ012814">
    <property type="protein sequence ID" value="CAB37614.1"/>
    <property type="status" value="JOINED"/>
    <property type="molecule type" value="Genomic_DNA"/>
</dbReference>
<dbReference type="EMBL" id="AJ012816">
    <property type="protein sequence ID" value="CAB37614.1"/>
    <property type="status" value="JOINED"/>
    <property type="molecule type" value="Genomic_DNA"/>
</dbReference>
<dbReference type="EMBL" id="AJ012817">
    <property type="protein sequence ID" value="CAB37614.1"/>
    <property type="status" value="JOINED"/>
    <property type="molecule type" value="Genomic_DNA"/>
</dbReference>
<dbReference type="EMBL" id="AJ012815">
    <property type="protein sequence ID" value="CAB37614.1"/>
    <property type="status" value="JOINED"/>
    <property type="molecule type" value="Genomic_DNA"/>
</dbReference>
<dbReference type="EMBL" id="AJ012812">
    <property type="protein sequence ID" value="CAB37615.1"/>
    <property type="molecule type" value="Genomic_DNA"/>
</dbReference>
<dbReference type="EMBL" id="AJ012813">
    <property type="protein sequence ID" value="CAB37615.1"/>
    <property type="status" value="JOINED"/>
    <property type="molecule type" value="Genomic_DNA"/>
</dbReference>
<dbReference type="EMBL" id="AJ012814">
    <property type="protein sequence ID" value="CAB37615.1"/>
    <property type="status" value="JOINED"/>
    <property type="molecule type" value="Genomic_DNA"/>
</dbReference>
<dbReference type="EMBL" id="AJ012818">
    <property type="protein sequence ID" value="CAB37615.1"/>
    <property type="status" value="JOINED"/>
    <property type="molecule type" value="Genomic_DNA"/>
</dbReference>
<dbReference type="EMBL" id="AJ012816">
    <property type="protein sequence ID" value="CAB37615.1"/>
    <property type="status" value="JOINED"/>
    <property type="molecule type" value="Genomic_DNA"/>
</dbReference>
<dbReference type="EMBL" id="AJ012815">
    <property type="protein sequence ID" value="CAB37615.1"/>
    <property type="status" value="JOINED"/>
    <property type="molecule type" value="Genomic_DNA"/>
</dbReference>
<dbReference type="EMBL" id="AJ012812">
    <property type="protein sequence ID" value="CAB37616.1"/>
    <property type="molecule type" value="Genomic_DNA"/>
</dbReference>
<dbReference type="EMBL" id="AJ012813">
    <property type="protein sequence ID" value="CAB37616.1"/>
    <property type="status" value="JOINED"/>
    <property type="molecule type" value="Genomic_DNA"/>
</dbReference>
<dbReference type="EMBL" id="AJ012814">
    <property type="protein sequence ID" value="CAB37616.1"/>
    <property type="status" value="JOINED"/>
    <property type="molecule type" value="Genomic_DNA"/>
</dbReference>
<dbReference type="EMBL" id="AJ012816">
    <property type="protein sequence ID" value="CAB37616.1"/>
    <property type="status" value="JOINED"/>
    <property type="molecule type" value="Genomic_DNA"/>
</dbReference>
<dbReference type="EMBL" id="AJ012820">
    <property type="protein sequence ID" value="CAB37616.1"/>
    <property type="status" value="JOINED"/>
    <property type="molecule type" value="Genomic_DNA"/>
</dbReference>
<dbReference type="EMBL" id="AJ012819">
    <property type="protein sequence ID" value="CAB37616.1"/>
    <property type="status" value="JOINED"/>
    <property type="molecule type" value="Genomic_DNA"/>
</dbReference>
<dbReference type="EMBL" id="AJ012815">
    <property type="protein sequence ID" value="CAB37616.1"/>
    <property type="status" value="JOINED"/>
    <property type="molecule type" value="Genomic_DNA"/>
</dbReference>
<dbReference type="CCDS" id="CCDS28387.1">
    <molecule id="Q9QYS9-3"/>
</dbReference>
<dbReference type="CCDS" id="CCDS49947.1">
    <molecule id="Q9QYS9-1"/>
</dbReference>
<dbReference type="CCDS" id="CCDS88989.1">
    <molecule id="Q9QYS9-4"/>
</dbReference>
<dbReference type="RefSeq" id="NP_001152988.1">
    <molecule id="Q9QYS9-4"/>
    <property type="nucleotide sequence ID" value="NM_001159516.2"/>
</dbReference>
<dbReference type="RefSeq" id="NP_001152989.1">
    <molecule id="Q9QYS9-1"/>
    <property type="nucleotide sequence ID" value="NM_001159517.2"/>
</dbReference>
<dbReference type="RefSeq" id="NP_068681.1">
    <molecule id="Q9QYS9-3"/>
    <property type="nucleotide sequence ID" value="NM_021881.3"/>
</dbReference>
<dbReference type="PDB" id="4DNN">
    <property type="method" value="X-ray"/>
    <property type="resolution" value="2.10 A"/>
    <property type="chains" value="A/B=14-67"/>
</dbReference>
<dbReference type="PDBsum" id="4DNN"/>
<dbReference type="SMR" id="Q9QYS9"/>
<dbReference type="BioGRID" id="202529">
    <property type="interactions" value="16"/>
</dbReference>
<dbReference type="FunCoup" id="Q9QYS9">
    <property type="interactions" value="3454"/>
</dbReference>
<dbReference type="IntAct" id="Q9QYS9">
    <property type="interactions" value="2"/>
</dbReference>
<dbReference type="MINT" id="Q9QYS9"/>
<dbReference type="STRING" id="10090.ENSMUSP00000156511"/>
<dbReference type="GlyGen" id="Q9QYS9">
    <property type="glycosylation" value="5 sites, 2 N-linked glycans (2 sites), 1 O-linked glycan (2 sites)"/>
</dbReference>
<dbReference type="iPTMnet" id="Q9QYS9"/>
<dbReference type="PhosphoSitePlus" id="Q9QYS9"/>
<dbReference type="SwissPalm" id="Q9QYS9"/>
<dbReference type="jPOST" id="Q9QYS9"/>
<dbReference type="PaxDb" id="10090-ENSMUSP00000095025"/>
<dbReference type="PeptideAtlas" id="Q9QYS9"/>
<dbReference type="ProteomicsDB" id="301842">
    <molecule id="Q9QYS9-1"/>
</dbReference>
<dbReference type="ProteomicsDB" id="301843">
    <molecule id="Q9QYS9-2"/>
</dbReference>
<dbReference type="ProteomicsDB" id="301844">
    <molecule id="Q9QYS9-3"/>
</dbReference>
<dbReference type="ProteomicsDB" id="301845">
    <molecule id="Q9QYS9-4"/>
</dbReference>
<dbReference type="ProteomicsDB" id="301846">
    <molecule id="Q9QYS9-5"/>
</dbReference>
<dbReference type="ProteomicsDB" id="301847">
    <molecule id="Q9QYS9-6"/>
</dbReference>
<dbReference type="ProteomicsDB" id="301848">
    <molecule id="Q9QYS9-7"/>
</dbReference>
<dbReference type="ProteomicsDB" id="301849">
    <molecule id="Q9QYS9-8"/>
</dbReference>
<dbReference type="Pumba" id="Q9QYS9"/>
<dbReference type="ABCD" id="Q9QYS9">
    <property type="antibodies" value="1 sequenced antibody"/>
</dbReference>
<dbReference type="Antibodypedia" id="20048">
    <property type="antibodies" value="465 antibodies from 42 providers"/>
</dbReference>
<dbReference type="DNASU" id="19317"/>
<dbReference type="Ensembl" id="ENSMUST00000042296.9">
    <molecule id="Q9QYS9-3"/>
    <property type="protein sequence ID" value="ENSMUSP00000046740.8"/>
    <property type="gene ID" value="ENSMUSG00000062078.16"/>
</dbReference>
<dbReference type="Ensembl" id="ENSMUST00000097414.11">
    <molecule id="Q9QYS9-4"/>
    <property type="protein sequence ID" value="ENSMUSP00000095025.5"/>
    <property type="gene ID" value="ENSMUSG00000062078.16"/>
</dbReference>
<dbReference type="Ensembl" id="ENSMUST00000233645.2">
    <molecule id="Q9QYS9-1"/>
    <property type="protein sequence ID" value="ENSMUSP00000156511.2"/>
    <property type="gene ID" value="ENSMUSG00000062078.16"/>
</dbReference>
<dbReference type="Ensembl" id="ENSMUST00000233828.2">
    <molecule id="Q9QYS9-4"/>
    <property type="protein sequence ID" value="ENSMUSP00000156665.2"/>
    <property type="gene ID" value="ENSMUSG00000062078.16"/>
</dbReference>
<dbReference type="GeneID" id="19317"/>
<dbReference type="KEGG" id="mmu:19317"/>
<dbReference type="UCSC" id="uc008akb.2">
    <molecule id="Q9QYS9-1"/>
    <property type="organism name" value="mouse"/>
</dbReference>
<dbReference type="UCSC" id="uc008ake.2">
    <molecule id="Q9QYS9-4"/>
    <property type="organism name" value="mouse"/>
</dbReference>
<dbReference type="UCSC" id="uc012ajv.1">
    <molecule id="Q9QYS9-3"/>
    <property type="organism name" value="mouse"/>
</dbReference>
<dbReference type="AGR" id="MGI:97837"/>
<dbReference type="CTD" id="9444"/>
<dbReference type="MGI" id="MGI:97837">
    <property type="gene designation" value="Qki"/>
</dbReference>
<dbReference type="VEuPathDB" id="HostDB:ENSMUSG00000062078"/>
<dbReference type="eggNOG" id="KOG1588">
    <property type="taxonomic scope" value="Eukaryota"/>
</dbReference>
<dbReference type="GeneTree" id="ENSGT00940000155310"/>
<dbReference type="HOGENOM" id="CLU_046595_2_0_1"/>
<dbReference type="InParanoid" id="Q9QYS9"/>
<dbReference type="OMA" id="WICAEIS"/>
<dbReference type="OrthoDB" id="6777263at2759"/>
<dbReference type="PhylomeDB" id="Q9QYS9"/>
<dbReference type="TreeFam" id="TF314878"/>
<dbReference type="BioGRID-ORCS" id="19317">
    <property type="hits" value="7 hits in 80 CRISPR screens"/>
</dbReference>
<dbReference type="CD-CODE" id="CE726F99">
    <property type="entry name" value="Postsynaptic density"/>
</dbReference>
<dbReference type="ChiTaRS" id="Qk">
    <property type="organism name" value="mouse"/>
</dbReference>
<dbReference type="EvolutionaryTrace" id="Q9QYS9"/>
<dbReference type="PRO" id="PR:Q9QYS9"/>
<dbReference type="Proteomes" id="UP000000589">
    <property type="component" value="Chromosome 17"/>
</dbReference>
<dbReference type="RNAct" id="Q9QYS9">
    <property type="molecule type" value="protein"/>
</dbReference>
<dbReference type="Bgee" id="ENSMUSG00000062078">
    <property type="expression patterns" value="Expressed in gonadal ridge and 281 other cell types or tissues"/>
</dbReference>
<dbReference type="ExpressionAtlas" id="Q9QYS9">
    <property type="expression patterns" value="baseline and differential"/>
</dbReference>
<dbReference type="GO" id="GO:0005737">
    <property type="term" value="C:cytoplasm"/>
    <property type="evidence" value="ECO:0000314"/>
    <property type="project" value="UniProtKB"/>
</dbReference>
<dbReference type="GO" id="GO:0010494">
    <property type="term" value="C:cytoplasmic stress granule"/>
    <property type="evidence" value="ECO:0007669"/>
    <property type="project" value="UniProtKB-SubCell"/>
</dbReference>
<dbReference type="GO" id="GO:0005829">
    <property type="term" value="C:cytosol"/>
    <property type="evidence" value="ECO:0007669"/>
    <property type="project" value="UniProtKB-SubCell"/>
</dbReference>
<dbReference type="GO" id="GO:0005634">
    <property type="term" value="C:nucleus"/>
    <property type="evidence" value="ECO:0000314"/>
    <property type="project" value="UniProtKB"/>
</dbReference>
<dbReference type="GO" id="GO:0045202">
    <property type="term" value="C:synapse"/>
    <property type="evidence" value="ECO:0000314"/>
    <property type="project" value="SynGO"/>
</dbReference>
<dbReference type="GO" id="GO:0003677">
    <property type="term" value="F:DNA binding"/>
    <property type="evidence" value="ECO:0007669"/>
    <property type="project" value="UniProtKB-KW"/>
</dbReference>
<dbReference type="GO" id="GO:0160089">
    <property type="term" value="F:internal N(7)-methylguanine-containing RNA reader activity"/>
    <property type="evidence" value="ECO:0007669"/>
    <property type="project" value="Ensembl"/>
</dbReference>
<dbReference type="GO" id="GO:0035198">
    <property type="term" value="F:miRNA binding"/>
    <property type="evidence" value="ECO:0000250"/>
    <property type="project" value="UniProtKB"/>
</dbReference>
<dbReference type="GO" id="GO:0003730">
    <property type="term" value="F:mRNA 3'-UTR binding"/>
    <property type="evidence" value="ECO:0000314"/>
    <property type="project" value="UniProtKB"/>
</dbReference>
<dbReference type="GO" id="GO:0003729">
    <property type="term" value="F:mRNA binding"/>
    <property type="evidence" value="ECO:0000314"/>
    <property type="project" value="UniProtKB"/>
</dbReference>
<dbReference type="GO" id="GO:0003723">
    <property type="term" value="F:RNA binding"/>
    <property type="evidence" value="ECO:0000304"/>
    <property type="project" value="MGI"/>
</dbReference>
<dbReference type="GO" id="GO:0017124">
    <property type="term" value="F:SH3 domain binding"/>
    <property type="evidence" value="ECO:0007669"/>
    <property type="project" value="UniProtKB-KW"/>
</dbReference>
<dbReference type="GO" id="GO:0003713">
    <property type="term" value="F:transcription coactivator activity"/>
    <property type="evidence" value="ECO:0000315"/>
    <property type="project" value="UniProtKB"/>
</dbReference>
<dbReference type="GO" id="GO:0061158">
    <property type="term" value="P:3'-UTR-mediated mRNA destabilization"/>
    <property type="evidence" value="ECO:0000314"/>
    <property type="project" value="MGI"/>
</dbReference>
<dbReference type="GO" id="GO:0008366">
    <property type="term" value="P:axon ensheathment"/>
    <property type="evidence" value="ECO:0000315"/>
    <property type="project" value="MGI"/>
</dbReference>
<dbReference type="GO" id="GO:0008298">
    <property type="term" value="P:intracellular mRNA localization"/>
    <property type="evidence" value="ECO:0007669"/>
    <property type="project" value="Ensembl"/>
</dbReference>
<dbReference type="GO" id="GO:0042759">
    <property type="term" value="P:long-chain fatty acid biosynthetic process"/>
    <property type="evidence" value="ECO:0000315"/>
    <property type="project" value="MGI"/>
</dbReference>
<dbReference type="GO" id="GO:0014004">
    <property type="term" value="P:microglia differentiation"/>
    <property type="evidence" value="ECO:0000315"/>
    <property type="project" value="UniProtKB"/>
</dbReference>
<dbReference type="GO" id="GO:0048255">
    <property type="term" value="P:mRNA stabilization"/>
    <property type="evidence" value="ECO:0000314"/>
    <property type="project" value="UniProtKB"/>
</dbReference>
<dbReference type="GO" id="GO:0051028">
    <property type="term" value="P:mRNA transport"/>
    <property type="evidence" value="ECO:0007669"/>
    <property type="project" value="UniProtKB-KW"/>
</dbReference>
<dbReference type="GO" id="GO:0042552">
    <property type="term" value="P:myelination"/>
    <property type="evidence" value="ECO:0000315"/>
    <property type="project" value="MGI"/>
</dbReference>
<dbReference type="GO" id="GO:1990764">
    <property type="term" value="P:myofibroblast contraction"/>
    <property type="evidence" value="ECO:0000315"/>
    <property type="project" value="UniProtKB"/>
</dbReference>
<dbReference type="GO" id="GO:1905869">
    <property type="term" value="P:negative regulation of 3'-UTR-mediated mRNA stabilization"/>
    <property type="evidence" value="ECO:0000315"/>
    <property type="project" value="UniProtKB"/>
</dbReference>
<dbReference type="GO" id="GO:0016525">
    <property type="term" value="P:negative regulation of angiogenesis"/>
    <property type="evidence" value="ECO:0000314"/>
    <property type="project" value="UniProtKB"/>
</dbReference>
<dbReference type="GO" id="GO:0120163">
    <property type="term" value="P:negative regulation of cold-induced thermogenesis"/>
    <property type="evidence" value="ECO:0000315"/>
    <property type="project" value="UniProtKB"/>
</dbReference>
<dbReference type="GO" id="GO:0045650">
    <property type="term" value="P:negative regulation of macrophage differentiation"/>
    <property type="evidence" value="ECO:0000250"/>
    <property type="project" value="UniProtKB"/>
</dbReference>
<dbReference type="GO" id="GO:2000626">
    <property type="term" value="P:negative regulation of miRNA catabolic process"/>
    <property type="evidence" value="ECO:0000250"/>
    <property type="project" value="UniProtKB"/>
</dbReference>
<dbReference type="GO" id="GO:0017148">
    <property type="term" value="P:negative regulation of translation"/>
    <property type="evidence" value="ECO:0000314"/>
    <property type="project" value="UniProtKB"/>
</dbReference>
<dbReference type="GO" id="GO:0032480">
    <property type="term" value="P:negative regulation of type I interferon production"/>
    <property type="evidence" value="ECO:0000250"/>
    <property type="project" value="UniProtKB"/>
</dbReference>
<dbReference type="GO" id="GO:1905870">
    <property type="term" value="P:positive regulation of 3'-UTR-mediated mRNA stabilization"/>
    <property type="evidence" value="ECO:0000314"/>
    <property type="project" value="UniProtKB"/>
</dbReference>
<dbReference type="GO" id="GO:0045542">
    <property type="term" value="P:positive regulation of cholesterol biosynthetic process"/>
    <property type="evidence" value="ECO:0000315"/>
    <property type="project" value="UniProtKB"/>
</dbReference>
<dbReference type="GO" id="GO:0010628">
    <property type="term" value="P:positive regulation of gene expression"/>
    <property type="evidence" value="ECO:0000315"/>
    <property type="project" value="MGI"/>
</dbReference>
<dbReference type="GO" id="GO:0031643">
    <property type="term" value="P:positive regulation of myelination"/>
    <property type="evidence" value="ECO:0000315"/>
    <property type="project" value="UniProtKB"/>
</dbReference>
<dbReference type="GO" id="GO:0048714">
    <property type="term" value="P:positive regulation of oligodendrocyte differentiation"/>
    <property type="evidence" value="ECO:0000314"/>
    <property type="project" value="UniProtKB"/>
</dbReference>
<dbReference type="GO" id="GO:0048710">
    <property type="term" value="P:regulation of astrocyte differentiation"/>
    <property type="evidence" value="ECO:0000315"/>
    <property type="project" value="UniProtKB"/>
</dbReference>
<dbReference type="GO" id="GO:0010717">
    <property type="term" value="P:regulation of epithelial to mesenchymal transition"/>
    <property type="evidence" value="ECO:0000250"/>
    <property type="project" value="UniProtKB"/>
</dbReference>
<dbReference type="GO" id="GO:0048024">
    <property type="term" value="P:regulation of mRNA splicing, via spliceosome"/>
    <property type="evidence" value="ECO:0000314"/>
    <property type="project" value="UniProtKB"/>
</dbReference>
<dbReference type="GO" id="GO:0007286">
    <property type="term" value="P:spermatid development"/>
    <property type="evidence" value="ECO:0000316"/>
    <property type="project" value="MGI"/>
</dbReference>
<dbReference type="GO" id="GO:0160091">
    <property type="term" value="P:spliceosome-depend formation of circular RNA"/>
    <property type="evidence" value="ECO:0000314"/>
    <property type="project" value="UniProtKB"/>
</dbReference>
<dbReference type="GO" id="GO:0035886">
    <property type="term" value="P:vascular associated smooth muscle cell differentiation"/>
    <property type="evidence" value="ECO:0000315"/>
    <property type="project" value="MGI"/>
</dbReference>
<dbReference type="GO" id="GO:0001570">
    <property type="term" value="P:vasculogenesis"/>
    <property type="evidence" value="ECO:0000315"/>
    <property type="project" value="MGI"/>
</dbReference>
<dbReference type="CDD" id="cd22465">
    <property type="entry name" value="KH-I_Hqk"/>
    <property type="match status" value="1"/>
</dbReference>
<dbReference type="FunFam" id="1.20.5.4010:FF:000001">
    <property type="entry name" value="protein quaking isoform X1"/>
    <property type="match status" value="1"/>
</dbReference>
<dbReference type="FunFam" id="3.30.1370.10:FF:000055">
    <property type="entry name" value="protein quaking isoform X1"/>
    <property type="match status" value="1"/>
</dbReference>
<dbReference type="Gene3D" id="1.20.5.4010">
    <property type="match status" value="1"/>
</dbReference>
<dbReference type="Gene3D" id="3.30.1370.10">
    <property type="entry name" value="K Homology domain, type 1"/>
    <property type="match status" value="1"/>
</dbReference>
<dbReference type="InterPro" id="IPR045071">
    <property type="entry name" value="BBP-like"/>
</dbReference>
<dbReference type="InterPro" id="IPR055256">
    <property type="entry name" value="KH_1_KHDC4/BBP-like"/>
</dbReference>
<dbReference type="InterPro" id="IPR004087">
    <property type="entry name" value="KH_dom"/>
</dbReference>
<dbReference type="InterPro" id="IPR036612">
    <property type="entry name" value="KH_dom_type_1_sf"/>
</dbReference>
<dbReference type="InterPro" id="IPR032367">
    <property type="entry name" value="Quaking_NLS"/>
</dbReference>
<dbReference type="InterPro" id="IPR032377">
    <property type="entry name" value="STAR_dimer"/>
</dbReference>
<dbReference type="PANTHER" id="PTHR11208:SF125">
    <property type="entry name" value="KH DOMAIN-CONTAINING RNA-BINDING PROTEIN QKI"/>
    <property type="match status" value="1"/>
</dbReference>
<dbReference type="PANTHER" id="PTHR11208">
    <property type="entry name" value="RNA-BINDING PROTEIN RELATED"/>
    <property type="match status" value="1"/>
</dbReference>
<dbReference type="Pfam" id="PF22675">
    <property type="entry name" value="KH-I_KHDC4-BBP"/>
    <property type="match status" value="1"/>
</dbReference>
<dbReference type="Pfam" id="PF16551">
    <property type="entry name" value="Quaking_NLS"/>
    <property type="match status" value="1"/>
</dbReference>
<dbReference type="Pfam" id="PF16544">
    <property type="entry name" value="STAR_dimer"/>
    <property type="match status" value="1"/>
</dbReference>
<dbReference type="SMART" id="SM00322">
    <property type="entry name" value="KH"/>
    <property type="match status" value="1"/>
</dbReference>
<dbReference type="SUPFAM" id="SSF54791">
    <property type="entry name" value="Eukaryotic type KH-domain (KH-domain type I)"/>
    <property type="match status" value="1"/>
</dbReference>
<keyword id="KW-0002">3D-structure</keyword>
<keyword id="KW-0025">Alternative splicing</keyword>
<keyword id="KW-0963">Cytoplasm</keyword>
<keyword id="KW-0217">Developmental protein</keyword>
<keyword id="KW-0221">Differentiation</keyword>
<keyword id="KW-0238">DNA-binding</keyword>
<keyword id="KW-0488">Methylation</keyword>
<keyword id="KW-0507">mRNA processing</keyword>
<keyword id="KW-0508">mRNA splicing</keyword>
<keyword id="KW-0509">mRNA transport</keyword>
<keyword id="KW-0539">Nucleus</keyword>
<keyword id="KW-0597">Phosphoprotein</keyword>
<keyword id="KW-1185">Reference proteome</keyword>
<keyword id="KW-0694">RNA-binding</keyword>
<keyword id="KW-0729">SH3-binding</keyword>
<keyword id="KW-0810">Translation regulation</keyword>
<keyword id="KW-0813">Transport</keyword>
<keyword id="KW-0832">Ubl conjugation</keyword>
<reference key="1">
    <citation type="journal article" date="1996" name="Nat. Genet.">
        <title>The quaking gene product necessary in embryogenesis and myelination combines features of RNA binding and signal transduction proteins.</title>
        <authorList>
            <person name="Ebersole T.A."/>
            <person name="Chen Q."/>
            <person name="Justice M.J."/>
            <person name="Artzt K."/>
        </authorList>
    </citation>
    <scope>NUCLEOTIDE SEQUENCE [MRNA] (ISOFORM QKI7)</scope>
    <scope>INVOLVEMENT IN QKV</scope>
    <scope>TISSUE SPECIFICITY</scope>
    <scope>MUTAGENESIS OF GLU-48</scope>
</reference>
<reference key="2">
    <citation type="journal article" date="1999" name="Mamm. Genome">
        <title>Genomic organization and expression analysis of the mouse qkI locus.</title>
        <authorList>
            <person name="Kondo T."/>
            <person name="Furuta T."/>
            <person name="Mitsunaga K."/>
            <person name="Ebersole T.A."/>
            <person name="Shichiri M."/>
            <person name="Wu J."/>
            <person name="Artzt K."/>
            <person name="Yamamura K."/>
            <person name="Abe K."/>
        </authorList>
    </citation>
    <scope>NUCLEOTIDE SEQUENCE [GENOMIC DNA / MRNA] (ISOFORMS QKI7B; QKI7; QKI6 AND QKI5A)</scope>
    <scope>ALTERNATIVE SPLICING (ISOFORM QKI5)</scope>
    <source>
        <strain>129/J</strain>
    </source>
</reference>
<reference key="3">
    <citation type="submission" date="2002-01" db="EMBL/GenBank/DDBJ databases">
        <title>Genomic sequence analysis in the mouse T-complex region.</title>
        <authorList>
            <person name="Brathwaite M.E."/>
            <person name="Waeltz P."/>
            <person name="Qian Y."/>
            <person name="Dudekula D."/>
            <person name="Schlessinger D."/>
            <person name="Nagaraja R."/>
        </authorList>
    </citation>
    <scope>NUCLEOTIDE SEQUENCE [LARGE SCALE GENOMIC DNA]</scope>
    <scope>ALTERNATIVE SPLICING</scope>
    <source>
        <strain>C57BL/6J</strain>
    </source>
</reference>
<reference key="4">
    <citation type="journal article" date="2005" name="Science">
        <title>The transcriptional landscape of the mammalian genome.</title>
        <authorList>
            <person name="Carninci P."/>
            <person name="Kasukawa T."/>
            <person name="Katayama S."/>
            <person name="Gough J."/>
            <person name="Frith M.C."/>
            <person name="Maeda N."/>
            <person name="Oyama R."/>
            <person name="Ravasi T."/>
            <person name="Lenhard B."/>
            <person name="Wells C."/>
            <person name="Kodzius R."/>
            <person name="Shimokawa K."/>
            <person name="Bajic V.B."/>
            <person name="Brenner S.E."/>
            <person name="Batalov S."/>
            <person name="Forrest A.R."/>
            <person name="Zavolan M."/>
            <person name="Davis M.J."/>
            <person name="Wilming L.G."/>
            <person name="Aidinis V."/>
            <person name="Allen J.E."/>
            <person name="Ambesi-Impiombato A."/>
            <person name="Apweiler R."/>
            <person name="Aturaliya R.N."/>
            <person name="Bailey T.L."/>
            <person name="Bansal M."/>
            <person name="Baxter L."/>
            <person name="Beisel K.W."/>
            <person name="Bersano T."/>
            <person name="Bono H."/>
            <person name="Chalk A.M."/>
            <person name="Chiu K.P."/>
            <person name="Choudhary V."/>
            <person name="Christoffels A."/>
            <person name="Clutterbuck D.R."/>
            <person name="Crowe M.L."/>
            <person name="Dalla E."/>
            <person name="Dalrymple B.P."/>
            <person name="de Bono B."/>
            <person name="Della Gatta G."/>
            <person name="di Bernardo D."/>
            <person name="Down T."/>
            <person name="Engstrom P."/>
            <person name="Fagiolini M."/>
            <person name="Faulkner G."/>
            <person name="Fletcher C.F."/>
            <person name="Fukushima T."/>
            <person name="Furuno M."/>
            <person name="Futaki S."/>
            <person name="Gariboldi M."/>
            <person name="Georgii-Hemming P."/>
            <person name="Gingeras T.R."/>
            <person name="Gojobori T."/>
            <person name="Green R.E."/>
            <person name="Gustincich S."/>
            <person name="Harbers M."/>
            <person name="Hayashi Y."/>
            <person name="Hensch T.K."/>
            <person name="Hirokawa N."/>
            <person name="Hill D."/>
            <person name="Huminiecki L."/>
            <person name="Iacono M."/>
            <person name="Ikeo K."/>
            <person name="Iwama A."/>
            <person name="Ishikawa T."/>
            <person name="Jakt M."/>
            <person name="Kanapin A."/>
            <person name="Katoh M."/>
            <person name="Kawasawa Y."/>
            <person name="Kelso J."/>
            <person name="Kitamura H."/>
            <person name="Kitano H."/>
            <person name="Kollias G."/>
            <person name="Krishnan S.P."/>
            <person name="Kruger A."/>
            <person name="Kummerfeld S.K."/>
            <person name="Kurochkin I.V."/>
            <person name="Lareau L.F."/>
            <person name="Lazarevic D."/>
            <person name="Lipovich L."/>
            <person name="Liu J."/>
            <person name="Liuni S."/>
            <person name="McWilliam S."/>
            <person name="Madan Babu M."/>
            <person name="Madera M."/>
            <person name="Marchionni L."/>
            <person name="Matsuda H."/>
            <person name="Matsuzawa S."/>
            <person name="Miki H."/>
            <person name="Mignone F."/>
            <person name="Miyake S."/>
            <person name="Morris K."/>
            <person name="Mottagui-Tabar S."/>
            <person name="Mulder N."/>
            <person name="Nakano N."/>
            <person name="Nakauchi H."/>
            <person name="Ng P."/>
            <person name="Nilsson R."/>
            <person name="Nishiguchi S."/>
            <person name="Nishikawa S."/>
            <person name="Nori F."/>
            <person name="Ohara O."/>
            <person name="Okazaki Y."/>
            <person name="Orlando V."/>
            <person name="Pang K.C."/>
            <person name="Pavan W.J."/>
            <person name="Pavesi G."/>
            <person name="Pesole G."/>
            <person name="Petrovsky N."/>
            <person name="Piazza S."/>
            <person name="Reed J."/>
            <person name="Reid J.F."/>
            <person name="Ring B.Z."/>
            <person name="Ringwald M."/>
            <person name="Rost B."/>
            <person name="Ruan Y."/>
            <person name="Salzberg S.L."/>
            <person name="Sandelin A."/>
            <person name="Schneider C."/>
            <person name="Schoenbach C."/>
            <person name="Sekiguchi K."/>
            <person name="Semple C.A."/>
            <person name="Seno S."/>
            <person name="Sessa L."/>
            <person name="Sheng Y."/>
            <person name="Shibata Y."/>
            <person name="Shimada H."/>
            <person name="Shimada K."/>
            <person name="Silva D."/>
            <person name="Sinclair B."/>
            <person name="Sperling S."/>
            <person name="Stupka E."/>
            <person name="Sugiura K."/>
            <person name="Sultana R."/>
            <person name="Takenaka Y."/>
            <person name="Taki K."/>
            <person name="Tammoja K."/>
            <person name="Tan S.L."/>
            <person name="Tang S."/>
            <person name="Taylor M.S."/>
            <person name="Tegner J."/>
            <person name="Teichmann S.A."/>
            <person name="Ueda H.R."/>
            <person name="van Nimwegen E."/>
            <person name="Verardo R."/>
            <person name="Wei C.L."/>
            <person name="Yagi K."/>
            <person name="Yamanishi H."/>
            <person name="Zabarovsky E."/>
            <person name="Zhu S."/>
            <person name="Zimmer A."/>
            <person name="Hide W."/>
            <person name="Bult C."/>
            <person name="Grimmond S.M."/>
            <person name="Teasdale R.D."/>
            <person name="Liu E.T."/>
            <person name="Brusic V."/>
            <person name="Quackenbush J."/>
            <person name="Wahlestedt C."/>
            <person name="Mattick J.S."/>
            <person name="Hume D.A."/>
            <person name="Kai C."/>
            <person name="Sasaki D."/>
            <person name="Tomaru Y."/>
            <person name="Fukuda S."/>
            <person name="Kanamori-Katayama M."/>
            <person name="Suzuki M."/>
            <person name="Aoki J."/>
            <person name="Arakawa T."/>
            <person name="Iida J."/>
            <person name="Imamura K."/>
            <person name="Itoh M."/>
            <person name="Kato T."/>
            <person name="Kawaji H."/>
            <person name="Kawagashira N."/>
            <person name="Kawashima T."/>
            <person name="Kojima M."/>
            <person name="Kondo S."/>
            <person name="Konno H."/>
            <person name="Nakano K."/>
            <person name="Ninomiya N."/>
            <person name="Nishio T."/>
            <person name="Okada M."/>
            <person name="Plessy C."/>
            <person name="Shibata K."/>
            <person name="Shiraki T."/>
            <person name="Suzuki S."/>
            <person name="Tagami M."/>
            <person name="Waki K."/>
            <person name="Watahiki A."/>
            <person name="Okamura-Oho Y."/>
            <person name="Suzuki H."/>
            <person name="Kawai J."/>
            <person name="Hayashizaki Y."/>
        </authorList>
    </citation>
    <scope>NUCLEOTIDE SEQUENCE [LARGE SCALE MRNA] OF 43-341 (ISOFORM QKI5)</scope>
    <source>
        <strain>C57BL/6J</strain>
        <tissue>Cerebellum</tissue>
        <tissue>Head</tissue>
    </source>
</reference>
<reference key="5">
    <citation type="journal article" date="2004" name="Genome Res.">
        <title>The status, quality, and expansion of the NIH full-length cDNA project: the Mammalian Gene Collection (MGC).</title>
        <authorList>
            <consortium name="The MGC Project Team"/>
        </authorList>
    </citation>
    <scope>NUCLEOTIDE SEQUENCE [LARGE SCALE MRNA] (ISOFORM QKI5)</scope>
    <source>
        <strain>C57BL/6J</strain>
        <tissue>Brain</tissue>
        <tissue>Embryo</tissue>
    </source>
</reference>
<reference key="6">
    <citation type="journal article" date="1999" name="Genomics">
        <title>Contrasting effects of ENU induced embryonic lethal mutations of the quaking gene.</title>
        <authorList>
            <person name="Cox R.D."/>
            <person name="Hugill A."/>
            <person name="Shedlovsky A."/>
            <person name="Noveroske J.K."/>
            <person name="Best S."/>
            <person name="Justice M.J."/>
            <person name="Lehrach H."/>
            <person name="Dove W.F."/>
        </authorList>
    </citation>
    <scope>NUCLEOTIDE SEQUENCE [GENOMIC DNA] OF 49-341</scope>
    <scope>ALTERNATIVE SPLICING (ISOFORMS QKI5; QKI7; QKI6 AND QKIG)</scope>
    <scope>MUTAGENESIS OF VAL-157</scope>
</reference>
<reference key="7">
    <citation type="journal article" date="1996" name="J. Neurosci.">
        <title>Neural cell type-specific expression of QKI proteins is altered in quakingviable mutant mice.</title>
        <authorList>
            <person name="Hardy R.J."/>
            <person name="Loushin C.L."/>
            <person name="Friedrich V.L. Jr."/>
            <person name="Chen Q."/>
            <person name="Ebersole T.A."/>
            <person name="Lazzarini R.A."/>
            <person name="Artzt K."/>
        </authorList>
    </citation>
    <scope>SUBCELLULAR LOCATION</scope>
    <scope>TISSUE SPECIFICITY</scope>
</reference>
<reference key="8">
    <citation type="journal article" date="1997" name="Mol. Cell. Biol.">
        <title>Self-association of the single-KH-domain family members Sam68, GRP33, GLD-1, and Qk1: role of the KH domain.</title>
        <authorList>
            <person name="Chen T."/>
            <person name="Damaj B.B."/>
            <person name="Herrera C."/>
            <person name="Lasko P."/>
            <person name="Richard S."/>
        </authorList>
    </citation>
    <scope>SUBUNIT</scope>
    <scope>INTERACTION WITH BICC1</scope>
</reference>
<reference key="9">
    <citation type="journal article" date="1998" name="J. Neurosci. Res.">
        <title>QKI expression is regulated during neuron-glial cell fate decisions.</title>
        <authorList>
            <person name="Hardy R.J."/>
        </authorList>
    </citation>
    <scope>TISSUE SPECIFICITY</scope>
    <scope>DEVELOPMENTAL STAGE</scope>
</reference>
<reference key="10">
    <citation type="journal article" date="1998" name="Mol. Cell. Biol.">
        <title>Structure-function analysis of Qk1: a lethal point mutation in mouse quaking prevents homodimerization.</title>
        <authorList>
            <person name="Chen T."/>
            <person name="Richard S."/>
        </authorList>
    </citation>
    <scope>SUBUNIT</scope>
    <scope>MUTAGENESIS OF GLU-48</scope>
</reference>
<reference key="11">
    <citation type="journal article" date="1999" name="J. Biol. Chem.">
        <title>The quaking I-5 protein (QKI-5) has a novel nuclear localization signal and shuttles between the nucleus and the cytoplasm.</title>
        <authorList>
            <person name="Wu J."/>
            <person name="Zhou L."/>
            <person name="Tonissen K."/>
            <person name="Tee R."/>
            <person name="Artzt K."/>
        </authorList>
    </citation>
    <scope>SUBUNIT</scope>
    <scope>SUBCELLULAR LOCATION</scope>
    <scope>MUTAGENESIS OF GLU-48; ARG-324; TYR-328 AND ARG-330</scope>
</reference>
<reference key="12">
    <citation type="journal article" date="1999" name="Proc. Natl. Acad. Sci. U.S.A.">
        <title>The STAR protein QKI-6 is a translational repressor.</title>
        <authorList>
            <person name="Saccomanno L."/>
            <person name="Loushin C."/>
            <person name="Jan E."/>
            <person name="Punkay E."/>
            <person name="Artzt K."/>
            <person name="Goodwin E.B."/>
        </authorList>
    </citation>
    <scope>FUNCTION</scope>
    <scope>RNA-BINDING</scope>
</reference>
<reference key="13">
    <citation type="journal article" date="2000" name="J. Neurosci.">
        <title>Destabilization and mislocalization of myelin basic protein mRNAs in quaking dysmyelination lacking the QKI RNA-binding proteins.</title>
        <authorList>
            <person name="Li Z."/>
            <person name="Zhang Y."/>
            <person name="Li D."/>
            <person name="Feng Y."/>
        </authorList>
    </citation>
    <scope>FUNCTION</scope>
</reference>
<reference key="14">
    <citation type="journal article" date="2001" name="Genes Dev.">
        <title>Nuclear translocation controlled by alternatively spliced isoforms inactivates the QUAKING apoptotic inducer.</title>
        <authorList>
            <person name="Pilotte J."/>
            <person name="Larocque D."/>
            <person name="Richard S."/>
        </authorList>
    </citation>
    <scope>FUNCTION</scope>
    <scope>SUBCELLULAR LOCATION</scope>
    <scope>SUBUNIT</scope>
</reference>
<reference key="15">
    <citation type="journal article" date="2002" name="Neuron">
        <title>Nuclear retention of MBP mRNAs in the quaking viable mice.</title>
        <authorList>
            <person name="Larocque D."/>
            <person name="Pilotte J."/>
            <person name="Chen T."/>
            <person name="Cloutier F."/>
            <person name="Massie B."/>
            <person name="Pedraza L."/>
            <person name="Couture R."/>
            <person name="Lasko P."/>
            <person name="Almazan G."/>
            <person name="Richard S."/>
        </authorList>
    </citation>
    <scope>FUNCTION</scope>
    <scope>RNA-BINDING</scope>
    <scope>MUTAGENESIS OF VAL-157</scope>
</reference>
<reference key="16">
    <citation type="journal article" date="2002" name="Proc. Natl. Acad. Sci. U.S.A.">
        <title>Function of quaking in myelination: regulation of alternative splicing.</title>
        <authorList>
            <person name="Wu J.I."/>
            <person name="Reed R.B."/>
            <person name="Grabowski P.J."/>
            <person name="Artzt K."/>
        </authorList>
    </citation>
    <scope>FUNCTION</scope>
</reference>
<reference key="17">
    <citation type="journal article" date="2002" name="Genesis">
        <title>Quaking is essential for blood vessel development.</title>
        <authorList>
            <person name="Noveroske J.K."/>
            <person name="Lai L."/>
            <person name="Gaussin V."/>
            <person name="Northrop J.L."/>
            <person name="Nakamura H."/>
            <person name="Hirschi K.K."/>
            <person name="Justice M.J."/>
        </authorList>
    </citation>
    <scope>FUNCTION</scope>
    <scope>MUTAGENESIS OF VAL-157</scope>
</reference>
<reference key="18">
    <citation type="journal article" date="2003" name="EMBO J.">
        <title>Tyrosine phosphorylation of QKI mediates developmental signals to regulate mRNA metabolism.</title>
        <authorList>
            <person name="Zhang Y."/>
            <person name="Lu Z."/>
            <person name="Ku L."/>
            <person name="Chen Y."/>
            <person name="Wang H."/>
            <person name="Feng Y."/>
        </authorList>
    </citation>
    <scope>PHOSPHORYLATION</scope>
    <scope>MUTAGENESIS OF 276-PRO--PRO-279; TYR-285; TYR-288; TYR-290; TYR-292 AND TYR-303</scope>
</reference>
<reference key="19">
    <citation type="journal article" date="2003" name="Mol. Biol. Cell">
        <title>Sam68 RNA binding protein is an in vivo substrate for protein arginine N-methyltransferase 1.</title>
        <authorList>
            <person name="Cote J."/>
            <person name="Boisvert F.-M."/>
            <person name="Boulanger M.-C."/>
            <person name="Bedford M.T."/>
            <person name="Richard S."/>
        </authorList>
    </citation>
    <scope>METHYLATION</scope>
</reference>
<reference key="20">
    <citation type="journal article" date="2003" name="Nucleic Acids Res.">
        <title>The quakingviable mutation affects qkI mRNA expression specifically in myelin-producing cells of the nervous system.</title>
        <authorList>
            <person name="Lu Z."/>
            <person name="Zhang Y."/>
            <person name="Ku L."/>
            <person name="Wang H."/>
            <person name="Ahmadian A."/>
            <person name="Feng Y."/>
        </authorList>
    </citation>
    <scope>INVOLVEMENT IN QKV</scope>
</reference>
<reference key="21">
    <citation type="journal article" date="2004" name="Mamm. Genome">
        <title>The neurological mutant quaking(viable) is Parkin deficient.</title>
        <authorList>
            <person name="Lorenzetti D."/>
            <person name="Antalffy B."/>
            <person name="Vogel H."/>
            <person name="Noveroske J."/>
            <person name="Armstrong D."/>
            <person name="Justice M."/>
        </authorList>
    </citation>
    <scope>INVOLVEMENT IN QKV</scope>
</reference>
<reference key="22">
    <citation type="journal article" date="2005" name="Dev. Biol.">
        <title>STAR proteins quaking-6 and GLD-1 regulate translation of the homologues GLI1 and tra-1 through a conserved RNA 3'UTR-based mechanism.</title>
        <authorList>
            <person name="Lakiza O."/>
            <person name="Frater L."/>
            <person name="Yoo Y."/>
            <person name="Villavicencio E."/>
            <person name="Walterhouse D."/>
            <person name="Goodwin E.B."/>
            <person name="Iannaccone P."/>
        </authorList>
    </citation>
    <scope>FUNCTION</scope>
</reference>
<reference key="23">
    <citation type="journal article" date="2003" name="Dev. Growth Differ.">
        <title>Defective smooth muscle development in qkI-deficient mice.</title>
        <authorList>
            <person name="Li Z."/>
            <person name="Takakura N."/>
            <person name="Oike Y."/>
            <person name="Imanaka T."/>
            <person name="Araki K."/>
            <person name="Suda T."/>
            <person name="Kaname T."/>
            <person name="Kondo T."/>
            <person name="Abe K."/>
            <person name="Yamamura K."/>
        </authorList>
    </citation>
    <scope>FUNCTION</scope>
    <scope>DISRUPTION PHENOTYPE</scope>
</reference>
<reference key="24">
    <citation type="journal article" date="2005" name="J. Biol. Chem.">
        <title>Developmental abnormalities of myelin basic protein expression in fyn knock-out brain reveal a role of Fyn in posttranscriptional regulation.</title>
        <authorList>
            <person name="Lu Z."/>
            <person name="Ku L."/>
            <person name="Chen Y."/>
            <person name="Feng Y."/>
        </authorList>
    </citation>
    <scope>PHOSPHORYLATION</scope>
</reference>
<reference key="25">
    <citation type="journal article" date="2005" name="Nat. Neurosci.">
        <title>Protection of p27(Kip1) mRNA by quaking RNA binding proteins promotes oligodendrocyte differentiation.</title>
        <authorList>
            <person name="Larocque D."/>
            <person name="Galarneau A."/>
            <person name="Liu H.-N."/>
            <person name="Scott M."/>
            <person name="Almazan G."/>
            <person name="Richard S."/>
        </authorList>
    </citation>
    <scope>FUNCTION</scope>
    <scope>RNA-BINDING</scope>
</reference>
<reference key="26">
    <citation type="journal article" date="2005" name="Nat. Struct. Mol. Biol.">
        <title>Target RNA motif and target mRNAs of the Quaking STAR protein.</title>
        <authorList>
            <person name="Galarneau A."/>
            <person name="Richard S."/>
        </authorList>
    </citation>
    <scope>FUNCTION</scope>
    <scope>RNA-BINDING</scope>
</reference>
<reference key="27">
    <citation type="journal article" date="2006" name="Genesis">
        <title>Visceral endoderm function is regulated by quaking and required for vascular development.</title>
        <authorList>
            <person name="Bohnsack B.L."/>
            <person name="Lai L."/>
            <person name="Northrop J.L."/>
            <person name="Justice M.J."/>
            <person name="Hirschi K.K."/>
        </authorList>
    </citation>
    <scope>FUNCTION</scope>
</reference>
<reference key="28">
    <citation type="journal article" date="2010" name="Cell">
        <title>A tissue-specific atlas of mouse protein phosphorylation and expression.</title>
        <authorList>
            <person name="Huttlin E.L."/>
            <person name="Jedrychowski M.P."/>
            <person name="Elias J.E."/>
            <person name="Goswami T."/>
            <person name="Rad R."/>
            <person name="Beausoleil S.A."/>
            <person name="Villen J."/>
            <person name="Haas W."/>
            <person name="Sowa M.E."/>
            <person name="Gygi S.P."/>
        </authorList>
    </citation>
    <scope>IDENTIFICATION BY MASS SPECTROMETRY [LARGE SCALE ANALYSIS]</scope>
    <source>
        <tissue>Brain</tissue>
        <tissue>Brown adipose tissue</tissue>
        <tissue>Heart</tissue>
        <tissue>Kidney</tissue>
        <tissue>Lung</tissue>
        <tissue>Spleen</tissue>
        <tissue>Testis</tissue>
    </source>
</reference>
<reference key="29">
    <citation type="journal article" date="2010" name="Proc. Natl. Acad. Sci. U.S.A.">
        <title>Quaking I controls a unique cytoplasmic pathway that regulates alternative splicing of myelin-associated glycoprotein.</title>
        <authorList>
            <person name="Zhao L."/>
            <person name="Mandler M.D."/>
            <person name="Yi H."/>
            <person name="Feng Y."/>
        </authorList>
    </citation>
    <scope>FUNCTION</scope>
    <scope>SUBCELLULAR LOCATION (ISOFORM QKI6)</scope>
</reference>
<reference key="30">
    <citation type="journal article" date="2011" name="PLoS Genet.">
        <title>Quaking regulates Hnrnpa1 expression through its 3' UTR in oligodendrocyte precursor cells.</title>
        <authorList>
            <person name="Zearfoss N.R."/>
            <person name="Clingman C.C."/>
            <person name="Farley B.M."/>
            <person name="McCoig L.M."/>
            <person name="Ryder S.P."/>
        </authorList>
    </citation>
    <scope>FUNCTION</scope>
</reference>
<reference key="31">
    <citation type="journal article" date="2014" name="Mol. Cell. Proteomics">
        <title>Immunoaffinity enrichment and mass spectrometry analysis of protein methylation.</title>
        <authorList>
            <person name="Guo A."/>
            <person name="Gu H."/>
            <person name="Zhou J."/>
            <person name="Mulhern D."/>
            <person name="Wang Y."/>
            <person name="Lee K.A."/>
            <person name="Yang V."/>
            <person name="Aguiar M."/>
            <person name="Kornhauser J."/>
            <person name="Jia X."/>
            <person name="Ren J."/>
            <person name="Beausoleil S.A."/>
            <person name="Silva J.C."/>
            <person name="Vemulapalli V."/>
            <person name="Bedford M.T."/>
            <person name="Comb M.J."/>
        </authorList>
    </citation>
    <scope>METHYLATION [LARGE SCALE ANALYSIS] AT ARG-227; ARG-242 AND ARG-256</scope>
    <scope>IDENTIFICATION BY MASS SPECTROMETRY [LARGE SCALE ANALYSIS]</scope>
    <source>
        <tissue>Brain</tissue>
        <tissue>Embryo</tissue>
    </source>
</reference>
<reference key="32">
    <citation type="journal article" date="2017" name="J. Biol. Chem.">
        <title>RNA-binding protein Quaking stabilizes Sirt2 mRNA during oligodendroglial differentiation.</title>
        <authorList>
            <person name="Thangaraj M.P."/>
            <person name="Furber K.L."/>
            <person name="Gan J.K."/>
            <person name="Ji S."/>
            <person name="Sobchishin L."/>
            <person name="Doucette J.R."/>
            <person name="Nazarali A.J."/>
        </authorList>
    </citation>
    <scope>FUNCTION (ISOFORM QKI5)</scope>
    <scope>SUBCELLULAR LOCATION (ISOFORM QKI5)</scope>
</reference>
<reference key="33">
    <citation type="journal article" date="2017" name="Genes Dev.">
        <title>Autogenous cross-regulation of Quaking mRNA processing and translation balances Quaking functions in splicing and translation.</title>
        <authorList>
            <person name="Fagg W.S."/>
            <person name="Liu N."/>
            <person name="Fair J.H."/>
            <person name="Shiue L."/>
            <person name="Katzman S."/>
            <person name="Donohue J.P."/>
            <person name="Ares M. Jr."/>
        </authorList>
    </citation>
    <scope>FUNCTION (ISOFORMS QKI5 AND QKI6)</scope>
    <scope>SUBCELLULAR LOCATION (ISOFORMS QKI5; QKI6 AND QKI7)</scope>
</reference>
<reference key="34">
    <citation type="journal article" date="2020" name="Cell Rep.">
        <title>QUAKING regulates microexon alternative splicing of the Rho GTPase pathway and controls microglia homeostasis.</title>
        <authorList>
            <person name="Lee J."/>
            <person name="Villarreal O.D."/>
            <person name="Chen X."/>
            <person name="Zandee S."/>
            <person name="Young Y.K."/>
            <person name="Torok C."/>
            <person name="Lamarche-Vane N."/>
            <person name="Prat A."/>
            <person name="Rivest S."/>
            <person name="Gosselin D."/>
            <person name="Richard S."/>
        </authorList>
    </citation>
    <scope>FUNCTION</scope>
    <scope>DISRUPTION PHENOTYPE</scope>
</reference>
<reference key="35">
    <citation type="journal article" date="2020" name="EMBO Rep.">
        <title>QKI regulates adipose tissue metabolism by acting as a brake on thermogenesis and promoting obesity.</title>
        <authorList>
            <person name="Lu H."/>
            <person name="Ye Z."/>
            <person name="Zhai Y."/>
            <person name="Wang L."/>
            <person name="Liu Y."/>
            <person name="Wang J."/>
            <person name="Zhang W."/>
            <person name="Luo W."/>
            <person name="Lu Z."/>
            <person name="Chen J."/>
        </authorList>
    </citation>
    <scope>FUNCTION</scope>
    <scope>SUBCELLULAR LOCATION</scope>
</reference>
<reference key="36">
    <citation type="journal article" date="2020" name="Nat. Commun.">
        <title>Targeting QKI-7 in vivo restores endothelial cell function in diabetes.</title>
        <authorList>
            <person name="Yang C."/>
            <person name="Eleftheriadou M."/>
            <person name="Kelaini S."/>
            <person name="Morrison T."/>
            <person name="Gonzalez M.V."/>
            <person name="Caines R."/>
            <person name="Edwards N."/>
            <person name="Yacoub A."/>
            <person name="Edgar K."/>
            <person name="Moez A."/>
            <person name="Ivetic A."/>
            <person name="Zampetaki A."/>
            <person name="Zeng L."/>
            <person name="Wilkinson F.L."/>
            <person name="Lois N."/>
            <person name="Stitt A.W."/>
            <person name="Grieve D.J."/>
            <person name="Margariti A."/>
        </authorList>
    </citation>
    <scope>FUNCTION (ISOFORM QKI7)</scope>
</reference>
<reference key="37">
    <citation type="journal article" date="2021" name="Elife">
        <title>Qki regulates myelinogenesis through Srebp2-dependent cholesterol biosynthesis.</title>
        <authorList>
            <person name="Zhou X."/>
            <person name="Shin S."/>
            <person name="He C."/>
            <person name="Zhang Q."/>
            <person name="Rasband M.N."/>
            <person name="Ren J."/>
            <person name="Dai C."/>
            <person name="Zorrilla-Veloz R.I."/>
            <person name="Shingu T."/>
            <person name="Yuan L."/>
            <person name="Wang Y."/>
            <person name="Chen Y."/>
            <person name="Lan F."/>
            <person name="Hu J."/>
        </authorList>
    </citation>
    <scope>FUNCTION (ISOFORM QKI5)</scope>
    <scope>DISRUPTION PHENOTYPE</scope>
</reference>
<reference key="38">
    <citation type="journal article" date="2021" name="J. Exp. Med.">
        <title>Qki is an essential regulator of microglial phagocytosis in demyelination.</title>
        <authorList>
            <person name="Ren J."/>
            <person name="Dai C."/>
            <person name="Zhou X."/>
            <person name="Barnes J.A."/>
            <person name="Chen X."/>
            <person name="Wang Y."/>
            <person name="Yuan L."/>
            <person name="Shingu T."/>
            <person name="Heimberger A.B."/>
            <person name="Chen Y."/>
            <person name="Hu J."/>
        </authorList>
    </citation>
    <scope>FUNCTION</scope>
</reference>
<reference key="39">
    <citation type="journal article" date="2021" name="Nat. Commun.">
        <title>Qki activates Srebp2-mediated cholesterol biosynthesis for maintenance of eye lens transparency.</title>
        <authorList>
            <person name="Shin S."/>
            <person name="Zhou H."/>
            <person name="He C."/>
            <person name="Wei Y."/>
            <person name="Wang Y."/>
            <person name="Shingu T."/>
            <person name="Zeng A."/>
            <person name="Wang S."/>
            <person name="Zhou X."/>
            <person name="Li H."/>
            <person name="Zhang Q."/>
            <person name="Mo Q."/>
            <person name="Long J."/>
            <person name="Lan F."/>
            <person name="Chen Y."/>
            <person name="Hu J."/>
        </authorList>
    </citation>
    <scope>FUNCTION (ISOFORM QKI5)</scope>
</reference>
<reference key="40">
    <citation type="journal article" date="2021" name="Nat. Commun.">
        <title>QKI is a critical pre-mRNA alternative splicing regulator of cardiac myofibrillogenesis and contractile function.</title>
        <authorList>
            <person name="Chen X."/>
            <person name="Liu Y."/>
            <person name="Xu C."/>
            <person name="Ba L."/>
            <person name="Liu Z."/>
            <person name="Li X."/>
            <person name="Huang J."/>
            <person name="Simpson E."/>
            <person name="Gao H."/>
            <person name="Cao D."/>
            <person name="Sheng W."/>
            <person name="Qi H."/>
            <person name="Ji H."/>
            <person name="Sanderson M."/>
            <person name="Cai C.L."/>
            <person name="Li X."/>
            <person name="Yang L."/>
            <person name="Na J."/>
            <person name="Yamamura K."/>
            <person name="Liu Y."/>
            <person name="Huang G."/>
            <person name="Shou W."/>
            <person name="Sun N."/>
        </authorList>
    </citation>
    <scope>FUNCTION</scope>
</reference>
<reference key="41">
    <citation type="journal article" date="2021" name="Nat. Commun.">
        <title>Loss of Quaking RNA binding protein disrupts the expression of genes associated with astrocyte maturation in mouse brain.</title>
        <authorList>
            <person name="Sakers K."/>
            <person name="Liu Y."/>
            <person name="Llaci L."/>
            <person name="Lee S.M."/>
            <person name="Vasek M.J."/>
            <person name="Rieger M.A."/>
            <person name="Brophy S."/>
            <person name="Tycksen E."/>
            <person name="Lewis R."/>
            <person name="Maloney S.E."/>
            <person name="Dougherty J.D."/>
        </authorList>
    </citation>
    <scope>FUNCTION (ISOFORM QKI6)</scope>
    <scope>DISRUPTION PHENOTYPE</scope>
</reference>
<reference key="42">
    <citation type="journal article" date="2022" name="Cell Biosci.">
        <title>QKI degradation in macrophage by RNF6 protects mice from MRSA infection via enhancing PI3K p110beta dependent autophagy.</title>
        <authorList>
            <person name="Zhai D."/>
            <person name="Wang W."/>
            <person name="Ye Z."/>
            <person name="Xue K."/>
            <person name="Chen G."/>
            <person name="Hu S."/>
            <person name="Yan Z."/>
            <person name="Guo Y."/>
            <person name="Wang F."/>
            <person name="Li X."/>
            <person name="Xiang A."/>
            <person name="Li X."/>
            <person name="Lu Z."/>
            <person name="Wang L."/>
        </authorList>
    </citation>
    <scope>FUNCTION</scope>
    <scope>UBIQUITINATION</scope>
</reference>
<reference key="43">
    <citation type="journal article" date="2023" name="Cardiovasc. Res.">
        <title>The RNA-binding protein QKI governs a muscle-specific alternative splicing program that shapes the contractile function of cardiomyocytes.</title>
        <authorList>
            <person name="Montanes-Agudo P."/>
            <person name="Aufiero S."/>
            <person name="Schepers E.N."/>
            <person name="van der Made I."/>
            <person name="Cocera-Ortega L."/>
            <person name="Ernault A.C."/>
            <person name="Richard S."/>
            <person name="Kuster D.W.D."/>
            <person name="Christoffels V.M."/>
            <person name="Pinto Y.M."/>
            <person name="Creemers E.E."/>
        </authorList>
    </citation>
    <scope>FUNCTION</scope>
    <scope>DISRUPTION PHENOTYPE</scope>
</reference>
<reference key="44">
    <citation type="journal article" date="2023" name="J. Cell Sci.">
        <title>Quaking regulates circular RNA production in cardiomyocytes.</title>
        <authorList>
            <person name="Montanes-Agudo P."/>
            <person name="van der Made I."/>
            <person name="Aufiero S."/>
            <person name="Tijsen A.J."/>
            <person name="Pinto Y.M."/>
            <person name="Creemers E.E."/>
        </authorList>
    </citation>
    <scope>FUNCTION</scope>
</reference>
<reference evidence="50" key="45">
    <citation type="journal article" date="2012" name="J. Mol. Biol.">
        <title>Structural analysis of the quaking homodimerization interface.</title>
        <authorList>
            <person name="Beuck C."/>
            <person name="Qu S."/>
            <person name="Fagg W.S."/>
            <person name="Ares M. Jr."/>
            <person name="Williamson J.R."/>
        </authorList>
    </citation>
    <scope>X-RAY CRYSTALLOGRAPHY (2.10 ANGSTROMS) OF 14-67</scope>
    <scope>SUBUNIT</scope>
    <scope>MUTAGENESIS OF TYR-17; LEU-21 AND GLU-48</scope>
</reference>
<comment type="function">
    <text evidence="2 5 6 7 8 9 10 14 17 18 20 21 22 24 26 28 29 30 32 33 34 35 36">RNA reader protein, which recognizes and binds specific RNAs, thereby regulating RNA metabolic processes, such as pre-mRNA splicing, circular RNA (circRNA) formation, mRNA export, mRNA stability and/or translation (PubMed:10535969, PubMed:11297509, PubMed:11917126, PubMed:12467586, PubMed:15568022, PubMed:31868295, PubMed:36088389). Involved in various cellular processes, such as mRNA storage into stress granules, apoptosis, lipid deposition, interferon response, glial cell fate and development (PubMed:10535969, PubMed:11297509, PubMed:11917126, PubMed:12467586, PubMed:15568022, PubMed:31868295). Binds to the 5'-NACUAAY-N(1,20)-UAAY-3' RNA core sequence (PubMed:16041388). Acts as a mRNA modification reader that specifically recognizes and binds mRNA transcripts modified by internal N(7)-methylguanine (m7G) (By similarity). Promotes the formation of circular RNAs (circRNAs) during the epithelial to mesenchymal transition and in cardiomyocytes: acts by binding to sites flanking circRNA-forming exons (PubMed:37272356). CircRNAs are produced by back-splicing circularization of pre-mRNAs (PubMed:37272356). Plays a central role in myelinization via 3 distinct mechanisms (PubMed:10864952, PubMed:11917126, PubMed:12467586, PubMed:15568022, PubMed:20956316, PubMed:21253564). First, acts by protecting and promoting stability of target mRNAs such as MBP, SIRT2 and CDKN1B, which promotes oligodendrocyte differentiation (PubMed:10864952, PubMed:15568022, PubMed:28188285). Second, participates in mRNA transport by regulating the nuclear export of MBP mRNA (PubMed:12467586). Finally, indirectly regulates mRNA splicing of MAG pre-mRNA during oligodendrocyte differentiation by acting as a negative regulator of MAG exon 12 alternative splicing: acts by binding to HNRNPA1 mRNA splicing factor, preventing its translation (PubMed:11917126, PubMed:20956316, PubMed:21253564). Involved in microglia differentiation and remyelination by regulating microexon alternative splicing of the Rho GTPase pathway (PubMed:33045062, PubMed:33378678). Involved in macrophage differentiation: promotes monocyte differentiation by regulating pre-mRNA splicing in naive peripheral blood monocytes (PubMed:36088389). Acts as an important regulator of muscle development: required for the contractile function of cardiomyocytes by regulating alternative splicing of cardiomyocyte transcripts (PubMed:33397958, PubMed:36627242). Acts as a negative regulator of thermogenesis by decreasing stability, nuclear export and translation of mRNAs encoding PPARGC1A and UCP1 (PubMed:31868295). Also required for visceral endoderm function and blood vessel development (PubMed:11892011, PubMed:16470614). May also play a role in smooth muscle development (PubMed:14706070). In addition to its RNA-binding activity, also acts as a nuclear transcription coactivator for SREBF2/SREBP2 (PubMed:33942715, PubMed:34021134).</text>
</comment>
<comment type="function">
    <molecule>Isoform QKI5</molecule>
    <text evidence="2 9 22 24 25 32 33">Nuclear isoform that acts as an indirect regulator of mRNA splicing (PubMed:11917126, PubMed:29021242). Regulates mRNA splicing of MAG pre-mRNA by inhibiting translation of HNRNPA1 mRNA, thereby preventing MAG exon 12 alternative splicing (PubMed:11917126, PubMed:21253564). Involved in oligodendrocyte differentiation by promoting stabilization of SIRT2 mRNA (PubMed:28188285). Acts as a negative regulator of the interferon response by binding to MAVS mRNA, downregulating its expression (By similarity). Also inhibits the interferon response by binding to fibrinectin FN1 pre-mRNA, repressing EDA exon inclusion in FN1 (By similarity). Delays macrophage differentiation by binding to CSF1R mRNA, promoting its degradation (By similarity). In addition to its RNA-binding activity, also acts as a nuclear transcription coactivator for SREBF2/SREBP2, promoting SREBF2/SREBP2-dependent cholesterol biosynthesis (PubMed:33942715, PubMed:34021134). SREBF2/SREBP2-dependent cholesterol biosynthesis participates to myelinization and is required for eye lens transparency (PubMed:33942715, PubMed:34021134).</text>
</comment>
<comment type="function">
    <molecule>Isoform QKI6</molecule>
    <text evidence="2 5 19 21 25 31">Cytosolic isoform that specifically recognizes and binds mRNA transcripts modified by internal N(7)-methylguanine (m7G) (By similarity). Interaction with G3BP1 promotes localization of m7G-containing mRNAs into stress granules in response to stress, thereby suppressing their translation (By similarity). Acts as a translational repressor for HNRNPA1 and GLI1 (PubMed:10535969, PubMed:16198329, PubMed:20956316, PubMed:29021242). Translation inhibition of HNRNPA1 during oligodendrocyte differentiation prevents inclusion of exon 12 in MAG pre-mRNA splicing (PubMed:20956316). Involved in astrocyte differentiation by regulating translation of target mRNAs (PubMed:33750804).</text>
</comment>
<comment type="function">
    <molecule>Isoform QKI7</molecule>
    <text evidence="2 7 27">Cytosolic isoform that specifically recognizes and binds mRNA transcripts modified by internal N(7)-methylguanine (m7G) (By similarity). Interaction with G3BP1 promotes localization of m7G-containing mRNAs into stress granules in response to stress, thereby suppressing their translation (By similarity). Acts as a negative regulator of angiogenesis by binding to mRNAs encoding CDH5, NLGN1 and TNFAIP6, promoting their degradation (PubMed:32732889). Can also induce apoptosis in the cytoplasm (PubMed:11297509). Heterodimerization with other isoforms results in nuclear translocation of isoform QKI7 and suppression of apoptosis (PubMed:11297509). Also binds some microRNAs: promotes stabilitation of miR-122 by mediating recruitment of poly(A) RNA polymerase TENT2, leading to 3' adenylation and stabilization of miR-122 (By similarity).</text>
</comment>
<comment type="subunit">
    <text evidence="4 7 23 39 40">Homodimer; does not require RNA to homodimerize (PubMed:10506177, PubMed:11297509, PubMed:22982292, PubMed:9671495). Able to heterodimerize with BICC1 (PubMed:9315629).</text>
</comment>
<comment type="subunit">
    <molecule>Isoform QKI6</molecule>
    <text evidence="2">Interacts with G3BP1; directing N(7)-methylguanine (m7G)-containing mRNAs to stress granules to suppress mRNA translation.</text>
</comment>
<comment type="subunit">
    <molecule>Isoform QKI7</molecule>
    <text evidence="2">Interacts with G3BP1; directing N(7)-methylguanine (m7G)-containing mRNAs to stress granules to suppress mRNA translation (By similarity). Interacts with TENT2; promoting stabilization of miR-122 (By similarity).</text>
</comment>
<comment type="subcellular location">
    <subcellularLocation>
        <location evidence="25 38">Cytoplasm</location>
    </subcellularLocation>
    <subcellularLocation>
        <location evidence="25 26 38">Nucleus</location>
    </subcellularLocation>
</comment>
<comment type="subcellular location">
    <molecule>Isoform QKI5</molecule>
    <subcellularLocation>
        <location evidence="4 25">Nucleus</location>
    </subcellularLocation>
    <subcellularLocation>
        <location evidence="4">Cytoplasm</location>
    </subcellularLocation>
    <text evidence="4 25">Localizes predominantly in the nucleus and at lower levels in cytoplasm (PubMed:10506177, PubMed:29021242). It shuttles between the cytoplasm and the nucleus (PubMed:10506177).</text>
</comment>
<comment type="subcellular location">
    <molecule>Isoform QKI6</molecule>
    <subcellularLocation>
        <location evidence="7 21 25">Cytoplasm</location>
        <location evidence="7 21 25">Cytosol</location>
    </subcellularLocation>
    <subcellularLocation>
        <location evidence="7">Nucleus</location>
    </subcellularLocation>
    <text evidence="7 25">Localizes predominantly in the cytoplasm and at lower levels in nucleus.</text>
</comment>
<comment type="subcellular location">
    <molecule>Isoform QKI7</molecule>
    <subcellularLocation>
        <location evidence="7 25">Cytoplasm</location>
        <location evidence="7 25">Cytosol</location>
    </subcellularLocation>
    <subcellularLocation>
        <location evidence="2">Cytoplasm</location>
        <location evidence="2">Stress granule</location>
    </subcellularLocation>
    <subcellularLocation>
        <location evidence="7">Nucleus</location>
    </subcellularLocation>
    <text evidence="2 7 25">Localizes predominantly in the cytoplasm and at much lower levels in nucleus (PubMed:11297509, PubMed:29021242). Shuttles between the cytosol and stress granules in response to stress (By similarity).</text>
</comment>
<comment type="alternative products">
    <event type="alternative splicing"/>
    <isoform>
        <id>Q9QYS9-1</id>
        <name>QKI5</name>
        <name evidence="42 43">QKI-5</name>
        <sequence type="displayed"/>
    </isoform>
    <isoform>
        <id>Q9QYS9-2</id>
        <name>QKI7B</name>
        <name evidence="42">QKI-7B</name>
        <sequence type="described" ref="VSP_019195"/>
    </isoform>
    <isoform>
        <id>Q9QYS9-3</id>
        <name>QKI7</name>
        <name evidence="42 44">QkI-7</name>
        <sequence type="described" ref="VSP_019196"/>
    </isoform>
    <isoform>
        <id>Q9QYS9-4</id>
        <name>QKI6</name>
        <name evidence="42 44">QKI-6</name>
        <name>QKI-5B</name>
        <sequence type="described" ref="VSP_019197"/>
    </isoform>
    <isoform>
        <id>Q9QYS9-5</id>
        <name>QKID</name>
        <sequence type="described" ref="VSP_019192 VSP_019193"/>
    </isoform>
    <isoform>
        <id>Q9QYS9-6</id>
        <name>6</name>
        <sequence type="described" ref="VSP_019194 VSP_019195"/>
    </isoform>
    <isoform>
        <id>Q9QYS9-7</id>
        <name>QKI5A</name>
        <name evidence="42">QKI-5A</name>
        <sequence type="described" ref="VSP_019199"/>
    </isoform>
    <isoform>
        <id>Q9QYS9-8</id>
        <name>QKIG</name>
        <name>QKI-G</name>
        <sequence type="described" ref="VSP_019198"/>
    </isoform>
</comment>
<comment type="tissue specificity">
    <text evidence="37 38 41">Highly expressed in myelin-forming cells. Expressed in oligodendrocytes and astrocytes in the central nervous system as well as Schwann cells in the peripheral nervous system. Also expressed in the yolk sac endoderm, adjacent to the mesodermal site of developing blood islands, where the differentiation of blood and endothelial cells first occurs (at protein level). Expressed in brain, lung, heart and testis.</text>
</comment>
<comment type="developmental stage">
    <text evidence="41">Expressed in neural progenitors of the ventricular zone (vz) during CNS development, but that expression is down-regulated during neuronal differentiation (PubMed:9778149). By contrast, neural progenitors located in specific subdomains of the vz maintain expression as they differentiate and migrate away into the emerging nervous system (PubMed:9778149). These have characteristics consistent with the acquisition of a glial rather than neuronal fate (at protein level) First detected in the neuroepithelium of the head folds at 7.5 dpc (PubMed:9778149). Expression is strongly present ventrally in the nascent brain and neural tube of 8.5 dpc and 9.5 dpc and in the heart of 8.5 dpc (PubMed:9778149).</text>
</comment>
<comment type="developmental stage">
    <molecule>Isoform QKI5</molecule>
    <text evidence="41">Expressed in early embryos, while isoform QKI6 and isoform QKI7 are found in late development when myelination begins.</text>
</comment>
<comment type="developmental stage">
    <molecule>Isoform QKI7</molecule>
    <text evidence="41">Expressed in late development when myelination begins.</text>
</comment>
<comment type="developmental stage">
    <molecule>Isoform QKI6</molecule>
    <text evidence="41">Expressed in late development when myelination begins.</text>
</comment>
<comment type="domain">
    <text evidence="2">The KH domain and the Qua2 region are involved in RNA binding.</text>
</comment>
<comment type="PTM">
    <text evidence="11">Methylated by PRMT1.</text>
</comment>
<comment type="PTM">
    <text evidence="12 16">Tyrosine phosphorylated at its C-terminus, probably by FYN. Phosphorylation leads to decreased mRNA-binding affinity, affecting transport and/or stabilization of MBP mRNA. The level of Tyr phosphorylation in the developing myelin is highest in the first postnatal week (P7). During the vigorous accumulation of MBP mRNA between P7 and P20, phosphorylation in the developing myelin drastically declines. By the end of the fourth postnatal week (P28), phosphorylation is reduced approximately 90%.</text>
</comment>
<comment type="PTM">
    <text evidence="34">Ubiquitinated by RNF6 in macrophages, leading to its degradation.</text>
</comment>
<comment type="disease">
    <text evidence="13 15 37">Defects in Qki are the cause of quakingviable (qkv). Qkv is a spontaneous mutation resulting in hypomyelinization of the central and peripheral nervous systems. Mutant mice develop normally until postnatal day 10 when they display rapid tremors or 'quaking' that is especially pronounced in hindlimbs and experience convulsive tonic-clonic seizures as they mature (PubMed:8589716). Mice with qkv specifically lack isoform 3 and isoform 4 in myelin-forming cells, while isoform 1 is lacking in oligodendrocytes of severely affected tracts (PubMed:12888522). Mice with qkv also lack the PRKN gene product, suggesting that the absence of PRKN may also affect the phenotype (PubMed:15014970).</text>
</comment>
<comment type="disruption phenotype">
    <text evidence="14 29 31 32 35">Embryonic lethality between 9.5 and 10.5 days post coitum (dpc) (PubMed:14706070). Embryos show a lack of large vitelline vessels in the yolk sacs, kinky neural tubes, pericardial effusion, open neural tubes and incomplete embryonic turning (PubMed:14706070). Conditional deletion in cardiomyocytes in the adult heart induces dilation of the ventricles and a rapid decline in cardiac function, associated with severe disruption of sarcomere organization (PubMed:36627242). Conditional deletion in neural stem cells leads to hypomyelination in the central nervous system due to impaired cholesterol biosynthesis (PubMed:33942715). Conditional deletion in microglia induces an inflammation phenotype, characterized by increased proinflammatory cytokine release and defects in processing phagocytosed cargo, leading to impaired remyelination (PubMed:33378678). Conditional deletion in astrocytes leads to impaired astrocyte maturation (PubMed:33750804).</text>
</comment>
<comment type="similarity">
    <text evidence="48">Belongs to the quaking family.</text>
</comment>
<sequence length="341" mass="37671">MVGEMETKEKPKPTPDYLMQLMNDKKLMSSLPNFCGIFNHLERLLDEEISRVRKDMYNDTLNGSTEKRSAELPDAVGPIVQLQEKLYVPVKEYPDFNFVGRILGPRGLTAKQLEAETGCKIMVRGKGSMRDKKKEEQNRGKPNWEHLNEDLHVLITVEDAQNRAEIKLKRAVEEVKKLLVPAAEGEDSLKKMQLMELAILNGTYRDANIKSPALAFSLAATAQAAPRIITGPAPVLPPAALRTPTPAGPTIMPLIRQIQTAVMPNGTPHPTAAIVPPGPEAGLIYTPYEYPYTLAPATSILEYPIEPSGVLGAVATKVRRHDMRVHPYQRIVTADRAATGN</sequence>
<organism>
    <name type="scientific">Mus musculus</name>
    <name type="common">Mouse</name>
    <dbReference type="NCBI Taxonomy" id="10090"/>
    <lineage>
        <taxon>Eukaryota</taxon>
        <taxon>Metazoa</taxon>
        <taxon>Chordata</taxon>
        <taxon>Craniata</taxon>
        <taxon>Vertebrata</taxon>
        <taxon>Euteleostomi</taxon>
        <taxon>Mammalia</taxon>
        <taxon>Eutheria</taxon>
        <taxon>Euarchontoglires</taxon>
        <taxon>Glires</taxon>
        <taxon>Rodentia</taxon>
        <taxon>Myomorpha</taxon>
        <taxon>Muroidea</taxon>
        <taxon>Muridae</taxon>
        <taxon>Murinae</taxon>
        <taxon>Mus</taxon>
        <taxon>Mus</taxon>
    </lineage>
</organism>
<name>QKI_MOUSE</name>
<proteinExistence type="evidence at protein level"/>
<protein>
    <recommendedName>
        <fullName evidence="48">KH domain-containing RNA-binding protein QKI</fullName>
    </recommendedName>
    <alternativeName>
        <fullName evidence="46">Protein quaking</fullName>
        <shortName evidence="49">MqkI</shortName>
    </alternativeName>
</protein>